<sequence length="33" mass="4420">PRRRRRRSSSRPIRRRRPRRVSRRRRRGGRRRR</sequence>
<reference key="1">
    <citation type="journal article" date="1969" name="Int. J. Protein Res.">
        <title>A new method for fractionation of protamines and the amino acid sequences of salmine and three components of iridine.</title>
        <authorList>
            <person name="Ando T."/>
            <person name="Watanabe S."/>
        </authorList>
    </citation>
    <scope>PROTEIN SEQUENCE</scope>
</reference>
<protein>
    <recommendedName>
        <fullName>Protamine-1B</fullName>
    </recommendedName>
    <alternativeName>
        <fullName>Iridine IB</fullName>
    </alternativeName>
</protein>
<comment type="function">
    <text>Protamines substitute for histones in the chromatin of sperm during the haploid phase of spermatogenesis. They compact sperm DNA into a highly condensed, stable and inactive complex.</text>
</comment>
<comment type="subcellular location">
    <subcellularLocation>
        <location>Nucleus</location>
    </subcellularLocation>
    <subcellularLocation>
        <location>Chromosome</location>
    </subcellularLocation>
</comment>
<comment type="tissue specificity">
    <text>Testis.</text>
</comment>
<keyword id="KW-0158">Chromosome</keyword>
<keyword id="KW-0217">Developmental protein</keyword>
<keyword id="KW-0221">Differentiation</keyword>
<keyword id="KW-0903">Direct protein sequencing</keyword>
<keyword id="KW-0226">DNA condensation</keyword>
<keyword id="KW-0238">DNA-binding</keyword>
<keyword id="KW-0544">Nucleosome core</keyword>
<keyword id="KW-0539">Nucleus</keyword>
<keyword id="KW-0744">Spermatogenesis</keyword>
<proteinExistence type="evidence at protein level"/>
<evidence type="ECO:0000256" key="1">
    <source>
        <dbReference type="SAM" id="MobiDB-lite"/>
    </source>
</evidence>
<accession>P02326</accession>
<feature type="peptide" id="PRO_0000044844" description="Protamine-1B">
    <location>
        <begin position="1"/>
        <end position="33"/>
    </location>
</feature>
<feature type="region of interest" description="Disordered" evidence="1">
    <location>
        <begin position="1"/>
        <end position="33"/>
    </location>
</feature>
<dbReference type="PIR" id="A02668">
    <property type="entry name" value="IRTR1B"/>
</dbReference>
<dbReference type="Proteomes" id="UP000694395">
    <property type="component" value="Unplaced"/>
</dbReference>
<dbReference type="GO" id="GO:0000786">
    <property type="term" value="C:nucleosome"/>
    <property type="evidence" value="ECO:0007669"/>
    <property type="project" value="UniProtKB-KW"/>
</dbReference>
<dbReference type="GO" id="GO:0005634">
    <property type="term" value="C:nucleus"/>
    <property type="evidence" value="ECO:0007669"/>
    <property type="project" value="UniProtKB-SubCell"/>
</dbReference>
<dbReference type="GO" id="GO:0003677">
    <property type="term" value="F:DNA binding"/>
    <property type="evidence" value="ECO:0007669"/>
    <property type="project" value="UniProtKB-KW"/>
</dbReference>
<dbReference type="GO" id="GO:0030154">
    <property type="term" value="P:cell differentiation"/>
    <property type="evidence" value="ECO:0007669"/>
    <property type="project" value="UniProtKB-KW"/>
</dbReference>
<dbReference type="GO" id="GO:0030261">
    <property type="term" value="P:chromosome condensation"/>
    <property type="evidence" value="ECO:0007669"/>
    <property type="project" value="UniProtKB-KW"/>
</dbReference>
<dbReference type="GO" id="GO:0007283">
    <property type="term" value="P:spermatogenesis"/>
    <property type="evidence" value="ECO:0007669"/>
    <property type="project" value="UniProtKB-KW"/>
</dbReference>
<organism>
    <name type="scientific">Oncorhynchus mykiss</name>
    <name type="common">Rainbow trout</name>
    <name type="synonym">Salmo gairdneri</name>
    <dbReference type="NCBI Taxonomy" id="8022"/>
    <lineage>
        <taxon>Eukaryota</taxon>
        <taxon>Metazoa</taxon>
        <taxon>Chordata</taxon>
        <taxon>Craniata</taxon>
        <taxon>Vertebrata</taxon>
        <taxon>Euteleostomi</taxon>
        <taxon>Actinopterygii</taxon>
        <taxon>Neopterygii</taxon>
        <taxon>Teleostei</taxon>
        <taxon>Protacanthopterygii</taxon>
        <taxon>Salmoniformes</taxon>
        <taxon>Salmonidae</taxon>
        <taxon>Salmoninae</taxon>
        <taxon>Oncorhynchus</taxon>
    </lineage>
</organism>
<name>PRTIB_ONCMY</name>